<dbReference type="EMBL" id="CR382132">
    <property type="protein sequence ID" value="CAG77850.2"/>
    <property type="molecule type" value="Genomic_DNA"/>
</dbReference>
<dbReference type="RefSeq" id="XP_505043.2">
    <property type="nucleotide sequence ID" value="XM_505043.2"/>
</dbReference>
<dbReference type="SMR" id="Q6C2R9"/>
<dbReference type="FunCoup" id="Q6C2R9">
    <property type="interactions" value="1393"/>
</dbReference>
<dbReference type="STRING" id="284591.Q6C2R9"/>
<dbReference type="EnsemblFungi" id="CAG77850">
    <property type="protein sequence ID" value="CAG77850"/>
    <property type="gene ID" value="YALI0_F05676g"/>
</dbReference>
<dbReference type="KEGG" id="yli:2907972"/>
<dbReference type="VEuPathDB" id="FungiDB:YALI0_F05676g"/>
<dbReference type="HOGENOM" id="CLU_062507_0_0_1"/>
<dbReference type="InParanoid" id="Q6C2R9"/>
<dbReference type="OMA" id="TRFKGHE"/>
<dbReference type="OrthoDB" id="111503at4891"/>
<dbReference type="Proteomes" id="UP000001300">
    <property type="component" value="Chromosome F"/>
</dbReference>
<dbReference type="GO" id="GO:0005829">
    <property type="term" value="C:cytosol"/>
    <property type="evidence" value="ECO:0000318"/>
    <property type="project" value="GO_Central"/>
</dbReference>
<dbReference type="GO" id="GO:0022627">
    <property type="term" value="C:cytosolic small ribosomal subunit"/>
    <property type="evidence" value="ECO:0007669"/>
    <property type="project" value="UniProtKB-UniRule"/>
</dbReference>
<dbReference type="GO" id="GO:0003735">
    <property type="term" value="F:structural constituent of ribosome"/>
    <property type="evidence" value="ECO:0007669"/>
    <property type="project" value="UniProtKB-UniRule"/>
</dbReference>
<dbReference type="GO" id="GO:0006412">
    <property type="term" value="P:translation"/>
    <property type="evidence" value="ECO:0007669"/>
    <property type="project" value="UniProtKB-UniRule"/>
</dbReference>
<dbReference type="HAMAP" id="MF_03122">
    <property type="entry name" value="Ribosomal_eS1_euk"/>
    <property type="match status" value="1"/>
</dbReference>
<dbReference type="InterPro" id="IPR001593">
    <property type="entry name" value="Ribosomal_eS1"/>
</dbReference>
<dbReference type="InterPro" id="IPR018281">
    <property type="entry name" value="Ribosomal_eS1_CS"/>
</dbReference>
<dbReference type="InterPro" id="IPR027500">
    <property type="entry name" value="Ribosomal_eS1_euk"/>
</dbReference>
<dbReference type="PANTHER" id="PTHR11830">
    <property type="entry name" value="40S RIBOSOMAL PROTEIN S3A"/>
    <property type="match status" value="1"/>
</dbReference>
<dbReference type="Pfam" id="PF01015">
    <property type="entry name" value="Ribosomal_S3Ae"/>
    <property type="match status" value="1"/>
</dbReference>
<dbReference type="SMART" id="SM01397">
    <property type="entry name" value="Ribosomal_S3Ae"/>
    <property type="match status" value="1"/>
</dbReference>
<dbReference type="PROSITE" id="PS01191">
    <property type="entry name" value="RIBOSOMAL_S3AE"/>
    <property type="match status" value="1"/>
</dbReference>
<gene>
    <name evidence="1" type="primary">RPS1</name>
    <name type="ordered locus">YALI0F05676g</name>
</gene>
<sequence>MAQGKNKRLSKGKKGIKKRVVDPFTKKDWYNIKAPSTFENRDVGKTLVNRSTGLRLANDYLKGRVLEVSLADLQGQEDHSFKKVKLRVDEVQGKNLLTNFHGFDFTSDKLRSLVRKWQTLIEANVTVKTSDDYFLRLFVIGFTKRQANQVKKTTYAQTSQINQIRKKMTDIVVREASNVTLAQLTAKLIPEVIGREIEKATQNIYPLQNVYIRKVKLLKQPKFDLGALLALHGGATDDNGKKVNREFKDVVLESV</sequence>
<name>RS3A_YARLI</name>
<organism>
    <name type="scientific">Yarrowia lipolytica (strain CLIB 122 / E 150)</name>
    <name type="common">Yeast</name>
    <name type="synonym">Candida lipolytica</name>
    <dbReference type="NCBI Taxonomy" id="284591"/>
    <lineage>
        <taxon>Eukaryota</taxon>
        <taxon>Fungi</taxon>
        <taxon>Dikarya</taxon>
        <taxon>Ascomycota</taxon>
        <taxon>Saccharomycotina</taxon>
        <taxon>Dipodascomycetes</taxon>
        <taxon>Dipodascales</taxon>
        <taxon>Dipodascales incertae sedis</taxon>
        <taxon>Yarrowia</taxon>
    </lineage>
</organism>
<reference key="1">
    <citation type="journal article" date="2004" name="Nature">
        <title>Genome evolution in yeasts.</title>
        <authorList>
            <person name="Dujon B."/>
            <person name="Sherman D."/>
            <person name="Fischer G."/>
            <person name="Durrens P."/>
            <person name="Casaregola S."/>
            <person name="Lafontaine I."/>
            <person name="de Montigny J."/>
            <person name="Marck C."/>
            <person name="Neuveglise C."/>
            <person name="Talla E."/>
            <person name="Goffard N."/>
            <person name="Frangeul L."/>
            <person name="Aigle M."/>
            <person name="Anthouard V."/>
            <person name="Babour A."/>
            <person name="Barbe V."/>
            <person name="Barnay S."/>
            <person name="Blanchin S."/>
            <person name="Beckerich J.-M."/>
            <person name="Beyne E."/>
            <person name="Bleykasten C."/>
            <person name="Boisrame A."/>
            <person name="Boyer J."/>
            <person name="Cattolico L."/>
            <person name="Confanioleri F."/>
            <person name="de Daruvar A."/>
            <person name="Despons L."/>
            <person name="Fabre E."/>
            <person name="Fairhead C."/>
            <person name="Ferry-Dumazet H."/>
            <person name="Groppi A."/>
            <person name="Hantraye F."/>
            <person name="Hennequin C."/>
            <person name="Jauniaux N."/>
            <person name="Joyet P."/>
            <person name="Kachouri R."/>
            <person name="Kerrest A."/>
            <person name="Koszul R."/>
            <person name="Lemaire M."/>
            <person name="Lesur I."/>
            <person name="Ma L."/>
            <person name="Muller H."/>
            <person name="Nicaud J.-M."/>
            <person name="Nikolski M."/>
            <person name="Oztas S."/>
            <person name="Ozier-Kalogeropoulos O."/>
            <person name="Pellenz S."/>
            <person name="Potier S."/>
            <person name="Richard G.-F."/>
            <person name="Straub M.-L."/>
            <person name="Suleau A."/>
            <person name="Swennen D."/>
            <person name="Tekaia F."/>
            <person name="Wesolowski-Louvel M."/>
            <person name="Westhof E."/>
            <person name="Wirth B."/>
            <person name="Zeniou-Meyer M."/>
            <person name="Zivanovic Y."/>
            <person name="Bolotin-Fukuhara M."/>
            <person name="Thierry A."/>
            <person name="Bouchier C."/>
            <person name="Caudron B."/>
            <person name="Scarpelli C."/>
            <person name="Gaillardin C."/>
            <person name="Weissenbach J."/>
            <person name="Wincker P."/>
            <person name="Souciet J.-L."/>
        </authorList>
    </citation>
    <scope>NUCLEOTIDE SEQUENCE [LARGE SCALE GENOMIC DNA]</scope>
    <source>
        <strain>CLIB 122 / E 150</strain>
    </source>
</reference>
<evidence type="ECO:0000255" key="1">
    <source>
        <dbReference type="HAMAP-Rule" id="MF_03122"/>
    </source>
</evidence>
<evidence type="ECO:0000305" key="2"/>
<protein>
    <recommendedName>
        <fullName evidence="1">Small ribosomal subunit protein eS1</fullName>
    </recommendedName>
    <alternativeName>
        <fullName evidence="2">40S ribosomal protein S1</fullName>
    </alternativeName>
</protein>
<keyword id="KW-0007">Acetylation</keyword>
<keyword id="KW-0963">Cytoplasm</keyword>
<keyword id="KW-1185">Reference proteome</keyword>
<keyword id="KW-0687">Ribonucleoprotein</keyword>
<keyword id="KW-0689">Ribosomal protein</keyword>
<proteinExistence type="inferred from homology"/>
<comment type="subunit">
    <text evidence="1">Component of the small ribosomal subunit. Mature ribosomes consist of a small (40S) and a large (60S) subunit. The 40S subunit contains about 33 different proteins and 1 molecule of RNA (18S). The 60S subunit contains about 49 different proteins and 3 molecules of RNA (25S, 5.8S and 5S).</text>
</comment>
<comment type="subcellular location">
    <subcellularLocation>
        <location evidence="1">Cytoplasm</location>
    </subcellularLocation>
</comment>
<comment type="similarity">
    <text evidence="1">Belongs to the eukaryotic ribosomal protein eS1 family.</text>
</comment>
<accession>Q6C2R9</accession>
<feature type="initiator methionine" description="Removed" evidence="1">
    <location>
        <position position="1"/>
    </location>
</feature>
<feature type="chain" id="PRO_0000389418" description="Small ribosomal subunit protein eS1">
    <location>
        <begin position="2"/>
        <end position="255"/>
    </location>
</feature>
<feature type="modified residue" description="N-acetylalanine; partial" evidence="1">
    <location>
        <position position="2"/>
    </location>
</feature>